<sequence length="462" mass="50356">MSAILTDRQAEELHKAIIAYLGVINAPKTAAAFREEVNFSAAFDDATRKKYEGLLEKKWTSVVRLQKKVLELEQRNQSLQSELDSTTPTSLLRRNQDPSSWLPRAPARHTLQSHRSPITCVAFHPVFSSLASGSEDTTIKIWDWELGELERTVKGHTKGVLDVDFGGPRGGTLLASCSSDLTIKLWDPSDEYKNIRTLPGHDHSVSAIRFVPSGAAGSPSSGNLLVSASRDKTLRVWDVTTGYCVKTIRGHADWVRDVSPSFDGRWLLSAGNDQTARLWDASSGEAKCTFLGHEHVIECVTIAPPVSYANLASLAGLKKPPPLSSSAEFVATGSRDKTIKIWDGRGTLIKTLAGHDNWVRALIFHPGGKYLLSASDDKTIRCWDLTQEGRCVKVVTDAHSHFVSCMRWAPNVVKDAPTNGDAPNGTTANGASKKKDEESAKAGIRCVIATGCVDLNVRIFAS</sequence>
<reference key="1">
    <citation type="journal article" date="2007" name="Plant Cell">
        <title>Dothideomycete-plant interactions illuminated by genome sequencing and EST analysis of the wheat pathogen Stagonospora nodorum.</title>
        <authorList>
            <person name="Hane J.K."/>
            <person name="Lowe R.G.T."/>
            <person name="Solomon P.S."/>
            <person name="Tan K.-C."/>
            <person name="Schoch C.L."/>
            <person name="Spatafora J.W."/>
            <person name="Crous P.W."/>
            <person name="Kodira C.D."/>
            <person name="Birren B.W."/>
            <person name="Galagan J.E."/>
            <person name="Torriani S.F.F."/>
            <person name="McDonald B.A."/>
            <person name="Oliver R.P."/>
        </authorList>
    </citation>
    <scope>NUCLEOTIDE SEQUENCE [LARGE SCALE GENOMIC DNA]</scope>
    <source>
        <strain>SN15 / ATCC MYA-4574 / FGSC 10173</strain>
    </source>
</reference>
<name>LIS1_PHANO</name>
<accession>Q0U1B1</accession>
<proteinExistence type="inferred from homology"/>
<evidence type="ECO:0000255" key="1">
    <source>
        <dbReference type="HAMAP-Rule" id="MF_03141"/>
    </source>
</evidence>
<evidence type="ECO:0000256" key="2">
    <source>
        <dbReference type="SAM" id="MobiDB-lite"/>
    </source>
</evidence>
<feature type="chain" id="PRO_0000405092" description="Nuclear distribution protein PAC1">
    <location>
        <begin position="1"/>
        <end position="462"/>
    </location>
</feature>
<feature type="domain" description="LisH" evidence="1">
    <location>
        <begin position="9"/>
        <end position="41"/>
    </location>
</feature>
<feature type="repeat" description="WD 1">
    <location>
        <begin position="113"/>
        <end position="154"/>
    </location>
</feature>
<feature type="repeat" description="WD 2">
    <location>
        <begin position="156"/>
        <end position="196"/>
    </location>
</feature>
<feature type="repeat" description="WD 3">
    <location>
        <begin position="200"/>
        <end position="247"/>
    </location>
</feature>
<feature type="repeat" description="WD 4">
    <location>
        <begin position="250"/>
        <end position="289"/>
    </location>
</feature>
<feature type="repeat" description="WD 5">
    <location>
        <begin position="292"/>
        <end position="352"/>
    </location>
</feature>
<feature type="repeat" description="WD 6">
    <location>
        <begin position="354"/>
        <end position="393"/>
    </location>
</feature>
<feature type="repeat" description="WD 7">
    <location>
        <begin position="398"/>
        <end position="445"/>
    </location>
</feature>
<feature type="repeat" description="WD 8">
    <location>
        <begin position="447"/>
        <end position="462"/>
    </location>
</feature>
<feature type="region of interest" description="Disordered" evidence="2">
    <location>
        <begin position="78"/>
        <end position="103"/>
    </location>
</feature>
<feature type="region of interest" description="Disordered" evidence="2">
    <location>
        <begin position="414"/>
        <end position="434"/>
    </location>
</feature>
<feature type="coiled-coil region" evidence="1">
    <location>
        <begin position="60"/>
        <end position="87"/>
    </location>
</feature>
<feature type="compositionally biased region" description="Polar residues" evidence="2">
    <location>
        <begin position="78"/>
        <end position="99"/>
    </location>
</feature>
<dbReference type="EMBL" id="CH445355">
    <property type="protein sequence ID" value="EAT78167.1"/>
    <property type="molecule type" value="Genomic_DNA"/>
</dbReference>
<dbReference type="RefSeq" id="XP_001804489.1">
    <property type="nucleotide sequence ID" value="XM_001804437.1"/>
</dbReference>
<dbReference type="SMR" id="Q0U1B1"/>
<dbReference type="FunCoup" id="Q0U1B1">
    <property type="interactions" value="39"/>
</dbReference>
<dbReference type="STRING" id="321614.Q0U1B1"/>
<dbReference type="EnsemblFungi" id="SNOT_14296">
    <property type="protein sequence ID" value="SNOT_14296"/>
    <property type="gene ID" value="SNOG_14296"/>
</dbReference>
<dbReference type="GeneID" id="5981413"/>
<dbReference type="KEGG" id="pno:SNOG_14296"/>
<dbReference type="VEuPathDB" id="FungiDB:JI435_142960"/>
<dbReference type="eggNOG" id="KOG0295">
    <property type="taxonomic scope" value="Eukaryota"/>
</dbReference>
<dbReference type="HOGENOM" id="CLU_000288_57_15_1"/>
<dbReference type="InParanoid" id="Q0U1B1"/>
<dbReference type="OMA" id="WHVATKE"/>
<dbReference type="OrthoDB" id="10264588at2759"/>
<dbReference type="Proteomes" id="UP000001055">
    <property type="component" value="Unassembled WGS sequence"/>
</dbReference>
<dbReference type="GO" id="GO:0005881">
    <property type="term" value="C:cytoplasmic microtubule"/>
    <property type="evidence" value="ECO:0000318"/>
    <property type="project" value="GO_Central"/>
</dbReference>
<dbReference type="GO" id="GO:0000776">
    <property type="term" value="C:kinetochore"/>
    <property type="evidence" value="ECO:0000318"/>
    <property type="project" value="GO_Central"/>
</dbReference>
<dbReference type="GO" id="GO:0005875">
    <property type="term" value="C:microtubule associated complex"/>
    <property type="evidence" value="ECO:0000318"/>
    <property type="project" value="GO_Central"/>
</dbReference>
<dbReference type="GO" id="GO:0005635">
    <property type="term" value="C:nuclear envelope"/>
    <property type="evidence" value="ECO:0000318"/>
    <property type="project" value="GO_Central"/>
</dbReference>
<dbReference type="GO" id="GO:0000922">
    <property type="term" value="C:spindle pole"/>
    <property type="evidence" value="ECO:0007669"/>
    <property type="project" value="UniProtKB-SubCell"/>
</dbReference>
<dbReference type="GO" id="GO:0070840">
    <property type="term" value="F:dynein complex binding"/>
    <property type="evidence" value="ECO:0000318"/>
    <property type="project" value="GO_Central"/>
</dbReference>
<dbReference type="GO" id="GO:0051010">
    <property type="term" value="F:microtubule plus-end binding"/>
    <property type="evidence" value="ECO:0000318"/>
    <property type="project" value="GO_Central"/>
</dbReference>
<dbReference type="GO" id="GO:0051301">
    <property type="term" value="P:cell division"/>
    <property type="evidence" value="ECO:0007669"/>
    <property type="project" value="UniProtKB-KW"/>
</dbReference>
<dbReference type="GO" id="GO:0000132">
    <property type="term" value="P:establishment of mitotic spindle orientation"/>
    <property type="evidence" value="ECO:0000318"/>
    <property type="project" value="GO_Central"/>
</dbReference>
<dbReference type="GO" id="GO:0031023">
    <property type="term" value="P:microtubule organizing center organization"/>
    <property type="evidence" value="ECO:0000318"/>
    <property type="project" value="GO_Central"/>
</dbReference>
<dbReference type="GO" id="GO:0051012">
    <property type="term" value="P:microtubule sliding"/>
    <property type="evidence" value="ECO:0007669"/>
    <property type="project" value="UniProtKB-UniRule"/>
</dbReference>
<dbReference type="GO" id="GO:0007097">
    <property type="term" value="P:nuclear migration"/>
    <property type="evidence" value="ECO:0000318"/>
    <property type="project" value="GO_Central"/>
</dbReference>
<dbReference type="GO" id="GO:0047496">
    <property type="term" value="P:vesicle transport along microtubule"/>
    <property type="evidence" value="ECO:0000318"/>
    <property type="project" value="GO_Central"/>
</dbReference>
<dbReference type="CDD" id="cd00200">
    <property type="entry name" value="WD40"/>
    <property type="match status" value="1"/>
</dbReference>
<dbReference type="FunFam" id="2.130.10.10:FF:000342">
    <property type="entry name" value="Nuclear distribution protein PAC1"/>
    <property type="match status" value="1"/>
</dbReference>
<dbReference type="FunFam" id="1.20.960.30:FF:000002">
    <property type="entry name" value="Platelet-activating factor acetylhydrolase ib"/>
    <property type="match status" value="1"/>
</dbReference>
<dbReference type="Gene3D" id="1.20.960.30">
    <property type="match status" value="1"/>
</dbReference>
<dbReference type="Gene3D" id="2.130.10.10">
    <property type="entry name" value="YVTN repeat-like/Quinoprotein amine dehydrogenase"/>
    <property type="match status" value="1"/>
</dbReference>
<dbReference type="HAMAP" id="MF_03141">
    <property type="entry name" value="lis1"/>
    <property type="match status" value="1"/>
</dbReference>
<dbReference type="InterPro" id="IPR017252">
    <property type="entry name" value="Dynein_regulator_LIS1"/>
</dbReference>
<dbReference type="InterPro" id="IPR020472">
    <property type="entry name" value="G-protein_beta_WD-40_rep"/>
</dbReference>
<dbReference type="InterPro" id="IPR037190">
    <property type="entry name" value="LIS1_N"/>
</dbReference>
<dbReference type="InterPro" id="IPR006594">
    <property type="entry name" value="LisH"/>
</dbReference>
<dbReference type="InterPro" id="IPR056795">
    <property type="entry name" value="PAC1-like_LisH-like_dom"/>
</dbReference>
<dbReference type="InterPro" id="IPR015943">
    <property type="entry name" value="WD40/YVTN_repeat-like_dom_sf"/>
</dbReference>
<dbReference type="InterPro" id="IPR019775">
    <property type="entry name" value="WD40_repeat_CS"/>
</dbReference>
<dbReference type="InterPro" id="IPR036322">
    <property type="entry name" value="WD40_repeat_dom_sf"/>
</dbReference>
<dbReference type="InterPro" id="IPR001680">
    <property type="entry name" value="WD40_rpt"/>
</dbReference>
<dbReference type="InterPro" id="IPR050349">
    <property type="entry name" value="WD_LIS1/nudF_dynein_reg"/>
</dbReference>
<dbReference type="PANTHER" id="PTHR44129">
    <property type="entry name" value="WD REPEAT-CONTAINING PROTEIN POP1"/>
    <property type="match status" value="1"/>
</dbReference>
<dbReference type="Pfam" id="PF24951">
    <property type="entry name" value="LisH_PAC1"/>
    <property type="match status" value="1"/>
</dbReference>
<dbReference type="Pfam" id="PF00400">
    <property type="entry name" value="WD40"/>
    <property type="match status" value="6"/>
</dbReference>
<dbReference type="PIRSF" id="PIRSF037647">
    <property type="entry name" value="Dynein_regulator_Lis1"/>
    <property type="match status" value="1"/>
</dbReference>
<dbReference type="PRINTS" id="PR00320">
    <property type="entry name" value="GPROTEINBRPT"/>
</dbReference>
<dbReference type="SMART" id="SM00320">
    <property type="entry name" value="WD40"/>
    <property type="match status" value="7"/>
</dbReference>
<dbReference type="SUPFAM" id="SSF109925">
    <property type="entry name" value="Lissencephaly-1 protein (Lis-1, PAF-AH alpha) N-terminal domain"/>
    <property type="match status" value="1"/>
</dbReference>
<dbReference type="SUPFAM" id="SSF50978">
    <property type="entry name" value="WD40 repeat-like"/>
    <property type="match status" value="1"/>
</dbReference>
<dbReference type="PROSITE" id="PS50896">
    <property type="entry name" value="LISH"/>
    <property type="match status" value="1"/>
</dbReference>
<dbReference type="PROSITE" id="PS00678">
    <property type="entry name" value="WD_REPEATS_1"/>
    <property type="match status" value="3"/>
</dbReference>
<dbReference type="PROSITE" id="PS50082">
    <property type="entry name" value="WD_REPEATS_2"/>
    <property type="match status" value="6"/>
</dbReference>
<dbReference type="PROSITE" id="PS50294">
    <property type="entry name" value="WD_REPEATS_REGION"/>
    <property type="match status" value="1"/>
</dbReference>
<comment type="function">
    <text evidence="1">Positively regulates the activity of the minus-end directed microtubule motor protein dynein. May enhance dynein-mediated microtubule sliding by targeting dynein to the microtubule plus end. Required for nuclear migration during vegetative growth as well as development. Required for retrograde early endosome (EE) transport from the hyphal tip. Required for localization of dynein to the mitotic spindle poles. Recruits additional proteins to the dynein complex at SPBs.</text>
</comment>
<comment type="subunit">
    <text evidence="1">Self-associates. Interacts with NDL1 and dynein.</text>
</comment>
<comment type="subcellular location">
    <subcellularLocation>
        <location evidence="1">Cytoplasm</location>
        <location evidence="1">Cytoskeleton</location>
    </subcellularLocation>
    <subcellularLocation>
        <location evidence="1">Cytoplasm</location>
        <location evidence="1">Cytoskeleton</location>
        <location evidence="1">Spindle pole</location>
    </subcellularLocation>
    <text evidence="1">Localizes to the plus ends of microtubules at the hyphal tip and the mitotic spindle poles.</text>
</comment>
<comment type="domain">
    <text evidence="1">Dimerization mediated by the LisH domain may be required to activate dynein.</text>
</comment>
<comment type="similarity">
    <text evidence="1">Belongs to the WD repeat LIS1/nudF family.</text>
</comment>
<keyword id="KW-0131">Cell cycle</keyword>
<keyword id="KW-0132">Cell division</keyword>
<keyword id="KW-0175">Coiled coil</keyword>
<keyword id="KW-0963">Cytoplasm</keyword>
<keyword id="KW-0206">Cytoskeleton</keyword>
<keyword id="KW-0493">Microtubule</keyword>
<keyword id="KW-0498">Mitosis</keyword>
<keyword id="KW-0677">Repeat</keyword>
<keyword id="KW-0813">Transport</keyword>
<keyword id="KW-0853">WD repeat</keyword>
<gene>
    <name evidence="1" type="primary">PAC1</name>
    <name evidence="1" type="synonym">LIS1</name>
    <name type="ORF">SNOG_14296</name>
</gene>
<organism>
    <name type="scientific">Phaeosphaeria nodorum (strain SN15 / ATCC MYA-4574 / FGSC 10173)</name>
    <name type="common">Glume blotch fungus</name>
    <name type="synonym">Parastagonospora nodorum</name>
    <dbReference type="NCBI Taxonomy" id="321614"/>
    <lineage>
        <taxon>Eukaryota</taxon>
        <taxon>Fungi</taxon>
        <taxon>Dikarya</taxon>
        <taxon>Ascomycota</taxon>
        <taxon>Pezizomycotina</taxon>
        <taxon>Dothideomycetes</taxon>
        <taxon>Pleosporomycetidae</taxon>
        <taxon>Pleosporales</taxon>
        <taxon>Pleosporineae</taxon>
        <taxon>Phaeosphaeriaceae</taxon>
        <taxon>Parastagonospora</taxon>
    </lineage>
</organism>
<protein>
    <recommendedName>
        <fullName evidence="1">Nuclear distribution protein PAC1</fullName>
    </recommendedName>
    <alternativeName>
        <fullName evidence="1">Lissencephaly-1 homolog</fullName>
        <shortName evidence="1">LIS-1</shortName>
    </alternativeName>
    <alternativeName>
        <fullName evidence="1">nudF homolog</fullName>
    </alternativeName>
</protein>